<protein>
    <recommendedName>
        <fullName>Variant surface glycoprotein ILTAT 1.22</fullName>
        <shortName>VSG</shortName>
    </recommendedName>
</protein>
<keyword id="KW-1003">Cell membrane</keyword>
<keyword id="KW-0325">Glycoprotein</keyword>
<keyword id="KW-0336">GPI-anchor</keyword>
<keyword id="KW-0449">Lipoprotein</keyword>
<keyword id="KW-0472">Membrane</keyword>
<keyword id="KW-0732">Signal</keyword>
<keyword id="KW-0821">Trypanosomiasis</keyword>
<proteinExistence type="evidence at transcript level"/>
<organism>
    <name type="scientific">Trypanosoma brucei brucei</name>
    <dbReference type="NCBI Taxonomy" id="5702"/>
    <lineage>
        <taxon>Eukaryota</taxon>
        <taxon>Discoba</taxon>
        <taxon>Euglenozoa</taxon>
        <taxon>Kinetoplastea</taxon>
        <taxon>Metakinetoplastina</taxon>
        <taxon>Trypanosomatida</taxon>
        <taxon>Trypanosomatidae</taxon>
        <taxon>Trypanosoma</taxon>
    </lineage>
</organism>
<evidence type="ECO:0000250" key="1"/>
<evidence type="ECO:0000255" key="2"/>
<feature type="signal peptide">
    <location>
        <begin position="1"/>
        <end position="12"/>
    </location>
</feature>
<feature type="chain" id="PRO_0000036419" description="Variant surface glycoprotein ILTAT 1.22">
    <location>
        <begin position="13"/>
        <end position="462"/>
    </location>
</feature>
<feature type="propeptide" id="PRO_0000036420" description="Removed in mature form" evidence="2">
    <location>
        <begin position="463"/>
        <end position="479"/>
    </location>
</feature>
<feature type="lipid moiety-binding region" description="GPI-anchor amidated asparagine" evidence="2">
    <location>
        <position position="462"/>
    </location>
</feature>
<feature type="glycosylation site" description="N-linked (GlcNAc...) asparagine" evidence="2">
    <location>
        <position position="120"/>
    </location>
</feature>
<feature type="glycosylation site" description="N-linked (GlcNAc...) asparagine" evidence="2">
    <location>
        <position position="458"/>
    </location>
</feature>
<reference key="1">
    <citation type="journal article" date="1991" name="J. Mol. Biol.">
        <title>Variant specific glycoprotein of Trypanosoma brucei consists of two domains each having an independently conserved pattern of cysteine residues.</title>
        <authorList>
            <person name="Carrington M."/>
            <person name="Miller N."/>
            <person name="Blum M.L."/>
            <person name="Roditi I."/>
            <person name="Wiley D.C."/>
            <person name="Turner M.J."/>
        </authorList>
    </citation>
    <scope>NUCLEOTIDE SEQUENCE [MRNA]</scope>
    <source>
        <strain>Isolate MIAG 202B</strain>
    </source>
</reference>
<comment type="function">
    <text>VSG forms a coat on the surface of the parasite. The trypanosome evades the immune response of the host by expressing a series of antigenically distinct VSGs from an estimated 1000 VSG genes.</text>
</comment>
<comment type="subcellular location">
    <subcellularLocation>
        <location>Cell membrane</location>
        <topology>Lipid-anchor</topology>
        <topology>GPI-anchor</topology>
    </subcellularLocation>
    <text evidence="1">A soluble form is released from ruptured cells by the action of a PI-PLC.</text>
</comment>
<name>VSI2_TRYBB</name>
<accession>P26327</accession>
<dbReference type="EMBL" id="X56765">
    <property type="protein sequence ID" value="CAA40084.1"/>
    <property type="molecule type" value="mRNA"/>
</dbReference>
<dbReference type="PIR" id="S18447">
    <property type="entry name" value="S18447"/>
</dbReference>
<dbReference type="SMR" id="P26327"/>
<dbReference type="GO" id="GO:0005886">
    <property type="term" value="C:plasma membrane"/>
    <property type="evidence" value="ECO:0007669"/>
    <property type="project" value="UniProtKB-SubCell"/>
</dbReference>
<dbReference type="GO" id="GO:0098552">
    <property type="term" value="C:side of membrane"/>
    <property type="evidence" value="ECO:0007669"/>
    <property type="project" value="UniProtKB-KW"/>
</dbReference>
<dbReference type="InterPro" id="IPR027446">
    <property type="entry name" value="VSG_C_dom_sf"/>
</dbReference>
<dbReference type="SUPFAM" id="SSF58087">
    <property type="entry name" value="Variant surface glycoprotein (N-terminal domain)"/>
    <property type="match status" value="1"/>
</dbReference>
<dbReference type="SUPFAM" id="SSF118251">
    <property type="entry name" value="Variant surface glycoprotein MITAT 1.2, VSG 221, C-terminal domain"/>
    <property type="match status" value="1"/>
</dbReference>
<sequence length="479" mass="51458">MDTAQVFALFYMATVMAAGTKNKASQAVSDPCSEIHFDEQLANYFENEVSAATTQLDENQNFERSWKLLQYLQMDHQKSKGAAALAAYASTINIRTAANVKAASGELLTAASLLRQRAANVSAAFQLQGQGVIKLGTPDIDNGAKSITHADAGCNYAAISKTVPTQRCTPPQQQADTITAADMQPDKLDELQLITEAYTTTITIAASAYSKGTPATGHTVYTYGNCQSTGGSASAQLGDTHALGIHVKTIGTKAVTEKTTLQPSSSNKCPDEGTTAELTPIKRLARAICLARKASLAKPKALSRLQYSDLQTDTDFKRIAAIFLSRNGKQLDPEKDSQEINELIKETYGPNEEHFHKSYVEALDNKKWEFKIKESKIEGTVNALANGVDAGLATAYYASKRQSTCGQAAADTPIVSSDVEKCKGKTQDDCRTADECEMRDGECNAKVAKTAEPDSKTNTTGNNSFAIKTSTLLLAVLLF</sequence>